<gene>
    <name evidence="1" type="primary">mscL</name>
    <name type="ordered locus">NWMN_1260</name>
</gene>
<keyword id="KW-1003">Cell membrane</keyword>
<keyword id="KW-0407">Ion channel</keyword>
<keyword id="KW-0406">Ion transport</keyword>
<keyword id="KW-0472">Membrane</keyword>
<keyword id="KW-0812">Transmembrane</keyword>
<keyword id="KW-1133">Transmembrane helix</keyword>
<keyword id="KW-0813">Transport</keyword>
<sequence>MLKEFKEFALKGNVLDLAIAVVMGAAFNKIISSLVENIIMPLIGKIFGSVDFAKEWSFWGIKYGLFIQSVIDFIIIAFALFIFVKIANTLMKKEEAEEEAVVEENVVLLTEIRDLLREKK</sequence>
<proteinExistence type="inferred from homology"/>
<organism>
    <name type="scientific">Staphylococcus aureus (strain Newman)</name>
    <dbReference type="NCBI Taxonomy" id="426430"/>
    <lineage>
        <taxon>Bacteria</taxon>
        <taxon>Bacillati</taxon>
        <taxon>Bacillota</taxon>
        <taxon>Bacilli</taxon>
        <taxon>Bacillales</taxon>
        <taxon>Staphylococcaceae</taxon>
        <taxon>Staphylococcus</taxon>
    </lineage>
</organism>
<accession>A6QGQ0</accession>
<reference key="1">
    <citation type="journal article" date="2008" name="J. Bacteriol.">
        <title>Genome sequence of Staphylococcus aureus strain Newman and comparative analysis of staphylococcal genomes: polymorphism and evolution of two major pathogenicity islands.</title>
        <authorList>
            <person name="Baba T."/>
            <person name="Bae T."/>
            <person name="Schneewind O."/>
            <person name="Takeuchi F."/>
            <person name="Hiramatsu K."/>
        </authorList>
    </citation>
    <scope>NUCLEOTIDE SEQUENCE [LARGE SCALE GENOMIC DNA]</scope>
    <source>
        <strain>Newman</strain>
    </source>
</reference>
<evidence type="ECO:0000255" key="1">
    <source>
        <dbReference type="HAMAP-Rule" id="MF_00115"/>
    </source>
</evidence>
<name>MSCL_STAAE</name>
<dbReference type="EMBL" id="AP009351">
    <property type="protein sequence ID" value="BAF67532.1"/>
    <property type="molecule type" value="Genomic_DNA"/>
</dbReference>
<dbReference type="RefSeq" id="WP_000910489.1">
    <property type="nucleotide sequence ID" value="NZ_JBBIAE010000001.1"/>
</dbReference>
<dbReference type="SMR" id="A6QGQ0"/>
<dbReference type="KEGG" id="sae:NWMN_1260"/>
<dbReference type="HOGENOM" id="CLU_095787_0_0_9"/>
<dbReference type="Proteomes" id="UP000006386">
    <property type="component" value="Chromosome"/>
</dbReference>
<dbReference type="GO" id="GO:0005886">
    <property type="term" value="C:plasma membrane"/>
    <property type="evidence" value="ECO:0007669"/>
    <property type="project" value="UniProtKB-SubCell"/>
</dbReference>
<dbReference type="GO" id="GO:0008381">
    <property type="term" value="F:mechanosensitive monoatomic ion channel activity"/>
    <property type="evidence" value="ECO:0007669"/>
    <property type="project" value="UniProtKB-UniRule"/>
</dbReference>
<dbReference type="FunFam" id="1.10.1200.120:FF:000002">
    <property type="entry name" value="Large-conductance mechanosensitive channel"/>
    <property type="match status" value="1"/>
</dbReference>
<dbReference type="Gene3D" id="1.10.1200.120">
    <property type="entry name" value="Large-conductance mechanosensitive channel, MscL, domain 1"/>
    <property type="match status" value="1"/>
</dbReference>
<dbReference type="HAMAP" id="MF_00115">
    <property type="entry name" value="MscL"/>
    <property type="match status" value="1"/>
</dbReference>
<dbReference type="InterPro" id="IPR019823">
    <property type="entry name" value="Mechanosensitive_channel_CS"/>
</dbReference>
<dbReference type="InterPro" id="IPR001185">
    <property type="entry name" value="MS_channel"/>
</dbReference>
<dbReference type="InterPro" id="IPR037673">
    <property type="entry name" value="MSC/AndL"/>
</dbReference>
<dbReference type="InterPro" id="IPR036019">
    <property type="entry name" value="MscL_channel"/>
</dbReference>
<dbReference type="NCBIfam" id="TIGR00220">
    <property type="entry name" value="mscL"/>
    <property type="match status" value="1"/>
</dbReference>
<dbReference type="NCBIfam" id="NF010559">
    <property type="entry name" value="PRK13954.1"/>
    <property type="match status" value="1"/>
</dbReference>
<dbReference type="PANTHER" id="PTHR30266:SF2">
    <property type="entry name" value="LARGE-CONDUCTANCE MECHANOSENSITIVE CHANNEL"/>
    <property type="match status" value="1"/>
</dbReference>
<dbReference type="PANTHER" id="PTHR30266">
    <property type="entry name" value="MECHANOSENSITIVE CHANNEL MSCL"/>
    <property type="match status" value="1"/>
</dbReference>
<dbReference type="Pfam" id="PF01741">
    <property type="entry name" value="MscL"/>
    <property type="match status" value="1"/>
</dbReference>
<dbReference type="PRINTS" id="PR01264">
    <property type="entry name" value="MECHCHANNEL"/>
</dbReference>
<dbReference type="SUPFAM" id="SSF81330">
    <property type="entry name" value="Gated mechanosensitive channel"/>
    <property type="match status" value="1"/>
</dbReference>
<dbReference type="PROSITE" id="PS01327">
    <property type="entry name" value="MSCL"/>
    <property type="match status" value="1"/>
</dbReference>
<feature type="chain" id="PRO_1000071350" description="Large-conductance mechanosensitive channel">
    <location>
        <begin position="1"/>
        <end position="120"/>
    </location>
</feature>
<feature type="transmembrane region" description="Helical" evidence="1">
    <location>
        <begin position="7"/>
        <end position="27"/>
    </location>
</feature>
<feature type="transmembrane region" description="Helical" evidence="1">
    <location>
        <begin position="64"/>
        <end position="84"/>
    </location>
</feature>
<comment type="function">
    <text evidence="1">Channel that opens in response to stretch forces in the membrane lipid bilayer. May participate in the regulation of osmotic pressure changes within the cell.</text>
</comment>
<comment type="subunit">
    <text evidence="1">Homopentamer.</text>
</comment>
<comment type="subcellular location">
    <subcellularLocation>
        <location evidence="1">Cell membrane</location>
        <topology evidence="1">Multi-pass membrane protein</topology>
    </subcellularLocation>
</comment>
<comment type="similarity">
    <text evidence="1">Belongs to the MscL family.</text>
</comment>
<protein>
    <recommendedName>
        <fullName evidence="1">Large-conductance mechanosensitive channel</fullName>
    </recommendedName>
</protein>